<feature type="chain" id="PRO_0000111360" description="Small ribosomal subunit protein uS9">
    <location>
        <begin position="1"/>
        <end position="131"/>
    </location>
</feature>
<evidence type="ECO:0000255" key="1">
    <source>
        <dbReference type="HAMAP-Rule" id="MF_00532"/>
    </source>
</evidence>
<evidence type="ECO:0000305" key="2"/>
<protein>
    <recommendedName>
        <fullName evidence="1">Small ribosomal subunit protein uS9</fullName>
    </recommendedName>
    <alternativeName>
        <fullName evidence="2">30S ribosomal protein S9</fullName>
    </alternativeName>
</protein>
<proteinExistence type="inferred from homology"/>
<reference key="1">
    <citation type="submission" date="2003-06" db="EMBL/GenBank/DDBJ databases">
        <title>The complete genome sequence of Haemophilus ducreyi.</title>
        <authorList>
            <person name="Munson R.S. Jr."/>
            <person name="Ray W.C."/>
            <person name="Mahairas G."/>
            <person name="Sabo P."/>
            <person name="Mungur R."/>
            <person name="Johnson L."/>
            <person name="Nguyen D."/>
            <person name="Wang J."/>
            <person name="Forst C."/>
            <person name="Hood L."/>
        </authorList>
    </citation>
    <scope>NUCLEOTIDE SEQUENCE [LARGE SCALE GENOMIC DNA]</scope>
    <source>
        <strain>35000HP / ATCC 700724</strain>
    </source>
</reference>
<sequence>MTAANQNYGTGRRKSSSARVFIKPGSGNITINQRSLEVYFGRETSRMVVRQPLELVELLDKLDLYITVKGGGISGQAGAIRHGITRALMEYDETLRPALRAAGFVTRDARRVERKKVGLHKARRRPQYSKR</sequence>
<name>RS9_HAEDU</name>
<accession>Q7VLF7</accession>
<organism>
    <name type="scientific">Haemophilus ducreyi (strain 35000HP / ATCC 700724)</name>
    <dbReference type="NCBI Taxonomy" id="233412"/>
    <lineage>
        <taxon>Bacteria</taxon>
        <taxon>Pseudomonadati</taxon>
        <taxon>Pseudomonadota</taxon>
        <taxon>Gammaproteobacteria</taxon>
        <taxon>Pasteurellales</taxon>
        <taxon>Pasteurellaceae</taxon>
        <taxon>Haemophilus</taxon>
    </lineage>
</organism>
<comment type="similarity">
    <text evidence="1">Belongs to the universal ribosomal protein uS9 family.</text>
</comment>
<dbReference type="EMBL" id="AE017143">
    <property type="protein sequence ID" value="AAP96291.1"/>
    <property type="molecule type" value="Genomic_DNA"/>
</dbReference>
<dbReference type="RefSeq" id="WP_010945336.1">
    <property type="nucleotide sequence ID" value="NC_002940.2"/>
</dbReference>
<dbReference type="SMR" id="Q7VLF7"/>
<dbReference type="STRING" id="233412.HD_1493"/>
<dbReference type="GeneID" id="60732820"/>
<dbReference type="KEGG" id="hdu:HD_1493"/>
<dbReference type="eggNOG" id="COG0103">
    <property type="taxonomic scope" value="Bacteria"/>
</dbReference>
<dbReference type="HOGENOM" id="CLU_046483_2_1_6"/>
<dbReference type="OrthoDB" id="9803965at2"/>
<dbReference type="Proteomes" id="UP000001022">
    <property type="component" value="Chromosome"/>
</dbReference>
<dbReference type="GO" id="GO:0022627">
    <property type="term" value="C:cytosolic small ribosomal subunit"/>
    <property type="evidence" value="ECO:0007669"/>
    <property type="project" value="TreeGrafter"/>
</dbReference>
<dbReference type="GO" id="GO:0003723">
    <property type="term" value="F:RNA binding"/>
    <property type="evidence" value="ECO:0007669"/>
    <property type="project" value="TreeGrafter"/>
</dbReference>
<dbReference type="GO" id="GO:0003735">
    <property type="term" value="F:structural constituent of ribosome"/>
    <property type="evidence" value="ECO:0007669"/>
    <property type="project" value="InterPro"/>
</dbReference>
<dbReference type="GO" id="GO:0006412">
    <property type="term" value="P:translation"/>
    <property type="evidence" value="ECO:0007669"/>
    <property type="project" value="UniProtKB-UniRule"/>
</dbReference>
<dbReference type="FunFam" id="3.30.230.10:FF:000001">
    <property type="entry name" value="30S ribosomal protein S9"/>
    <property type="match status" value="1"/>
</dbReference>
<dbReference type="Gene3D" id="3.30.230.10">
    <property type="match status" value="1"/>
</dbReference>
<dbReference type="HAMAP" id="MF_00532_B">
    <property type="entry name" value="Ribosomal_uS9_B"/>
    <property type="match status" value="1"/>
</dbReference>
<dbReference type="InterPro" id="IPR020568">
    <property type="entry name" value="Ribosomal_Su5_D2-typ_SF"/>
</dbReference>
<dbReference type="InterPro" id="IPR000754">
    <property type="entry name" value="Ribosomal_uS9"/>
</dbReference>
<dbReference type="InterPro" id="IPR023035">
    <property type="entry name" value="Ribosomal_uS9_bac/plastid"/>
</dbReference>
<dbReference type="InterPro" id="IPR020574">
    <property type="entry name" value="Ribosomal_uS9_CS"/>
</dbReference>
<dbReference type="InterPro" id="IPR014721">
    <property type="entry name" value="Ribsml_uS5_D2-typ_fold_subgr"/>
</dbReference>
<dbReference type="NCBIfam" id="NF001099">
    <property type="entry name" value="PRK00132.1"/>
    <property type="match status" value="1"/>
</dbReference>
<dbReference type="PANTHER" id="PTHR21569">
    <property type="entry name" value="RIBOSOMAL PROTEIN S9"/>
    <property type="match status" value="1"/>
</dbReference>
<dbReference type="PANTHER" id="PTHR21569:SF1">
    <property type="entry name" value="SMALL RIBOSOMAL SUBUNIT PROTEIN US9M"/>
    <property type="match status" value="1"/>
</dbReference>
<dbReference type="Pfam" id="PF00380">
    <property type="entry name" value="Ribosomal_S9"/>
    <property type="match status" value="1"/>
</dbReference>
<dbReference type="SUPFAM" id="SSF54211">
    <property type="entry name" value="Ribosomal protein S5 domain 2-like"/>
    <property type="match status" value="1"/>
</dbReference>
<dbReference type="PROSITE" id="PS00360">
    <property type="entry name" value="RIBOSOMAL_S9"/>
    <property type="match status" value="1"/>
</dbReference>
<gene>
    <name evidence="1" type="primary">rpsI</name>
    <name type="ordered locus">HD_1493</name>
</gene>
<keyword id="KW-1185">Reference proteome</keyword>
<keyword id="KW-0687">Ribonucleoprotein</keyword>
<keyword id="KW-0689">Ribosomal protein</keyword>